<dbReference type="EC" id="2.4.2.10" evidence="1"/>
<dbReference type="EMBL" id="CP000644">
    <property type="protein sequence ID" value="ABO88301.1"/>
    <property type="molecule type" value="Genomic_DNA"/>
</dbReference>
<dbReference type="RefSeq" id="WP_005318174.1">
    <property type="nucleotide sequence ID" value="NC_009348.1"/>
</dbReference>
<dbReference type="SMR" id="A4SHC9"/>
<dbReference type="STRING" id="29491.GCA_000820065_04138"/>
<dbReference type="KEGG" id="asa:ASA_0102"/>
<dbReference type="eggNOG" id="COG0461">
    <property type="taxonomic scope" value="Bacteria"/>
</dbReference>
<dbReference type="HOGENOM" id="CLU_074878_0_1_6"/>
<dbReference type="UniPathway" id="UPA00070">
    <property type="reaction ID" value="UER00119"/>
</dbReference>
<dbReference type="Proteomes" id="UP000000225">
    <property type="component" value="Chromosome"/>
</dbReference>
<dbReference type="GO" id="GO:0005737">
    <property type="term" value="C:cytoplasm"/>
    <property type="evidence" value="ECO:0007669"/>
    <property type="project" value="TreeGrafter"/>
</dbReference>
<dbReference type="GO" id="GO:0000287">
    <property type="term" value="F:magnesium ion binding"/>
    <property type="evidence" value="ECO:0007669"/>
    <property type="project" value="UniProtKB-UniRule"/>
</dbReference>
<dbReference type="GO" id="GO:0004588">
    <property type="term" value="F:orotate phosphoribosyltransferase activity"/>
    <property type="evidence" value="ECO:0007669"/>
    <property type="project" value="UniProtKB-UniRule"/>
</dbReference>
<dbReference type="GO" id="GO:0006207">
    <property type="term" value="P:'de novo' pyrimidine nucleobase biosynthetic process"/>
    <property type="evidence" value="ECO:0007669"/>
    <property type="project" value="TreeGrafter"/>
</dbReference>
<dbReference type="GO" id="GO:0044205">
    <property type="term" value="P:'de novo' UMP biosynthetic process"/>
    <property type="evidence" value="ECO:0007669"/>
    <property type="project" value="UniProtKB-UniRule"/>
</dbReference>
<dbReference type="GO" id="GO:0046132">
    <property type="term" value="P:pyrimidine ribonucleoside biosynthetic process"/>
    <property type="evidence" value="ECO:0007669"/>
    <property type="project" value="TreeGrafter"/>
</dbReference>
<dbReference type="CDD" id="cd06223">
    <property type="entry name" value="PRTases_typeI"/>
    <property type="match status" value="1"/>
</dbReference>
<dbReference type="FunFam" id="3.40.50.2020:FF:000008">
    <property type="entry name" value="Orotate phosphoribosyltransferase"/>
    <property type="match status" value="1"/>
</dbReference>
<dbReference type="Gene3D" id="3.40.50.2020">
    <property type="match status" value="1"/>
</dbReference>
<dbReference type="HAMAP" id="MF_01208">
    <property type="entry name" value="PyrE"/>
    <property type="match status" value="1"/>
</dbReference>
<dbReference type="InterPro" id="IPR023031">
    <property type="entry name" value="OPRT"/>
</dbReference>
<dbReference type="InterPro" id="IPR004467">
    <property type="entry name" value="Or_phspho_trans_dom"/>
</dbReference>
<dbReference type="InterPro" id="IPR000836">
    <property type="entry name" value="PRibTrfase_dom"/>
</dbReference>
<dbReference type="InterPro" id="IPR029057">
    <property type="entry name" value="PRTase-like"/>
</dbReference>
<dbReference type="NCBIfam" id="TIGR00336">
    <property type="entry name" value="pyrE"/>
    <property type="match status" value="1"/>
</dbReference>
<dbReference type="PANTHER" id="PTHR46683">
    <property type="entry name" value="OROTATE PHOSPHORIBOSYLTRANSFERASE 1-RELATED"/>
    <property type="match status" value="1"/>
</dbReference>
<dbReference type="PANTHER" id="PTHR46683:SF1">
    <property type="entry name" value="OROTATE PHOSPHORIBOSYLTRANSFERASE 1-RELATED"/>
    <property type="match status" value="1"/>
</dbReference>
<dbReference type="Pfam" id="PF00156">
    <property type="entry name" value="Pribosyltran"/>
    <property type="match status" value="1"/>
</dbReference>
<dbReference type="SUPFAM" id="SSF53271">
    <property type="entry name" value="PRTase-like"/>
    <property type="match status" value="1"/>
</dbReference>
<dbReference type="PROSITE" id="PS00103">
    <property type="entry name" value="PUR_PYR_PR_TRANSFER"/>
    <property type="match status" value="1"/>
</dbReference>
<name>PYRE_AERS4</name>
<comment type="function">
    <text evidence="1">Catalyzes the transfer of a ribosyl phosphate group from 5-phosphoribose 1-diphosphate to orotate, leading to the formation of orotidine monophosphate (OMP).</text>
</comment>
<comment type="catalytic activity">
    <reaction evidence="1">
        <text>orotidine 5'-phosphate + diphosphate = orotate + 5-phospho-alpha-D-ribose 1-diphosphate</text>
        <dbReference type="Rhea" id="RHEA:10380"/>
        <dbReference type="ChEBI" id="CHEBI:30839"/>
        <dbReference type="ChEBI" id="CHEBI:33019"/>
        <dbReference type="ChEBI" id="CHEBI:57538"/>
        <dbReference type="ChEBI" id="CHEBI:58017"/>
        <dbReference type="EC" id="2.4.2.10"/>
    </reaction>
</comment>
<comment type="cofactor">
    <cofactor evidence="1">
        <name>Mg(2+)</name>
        <dbReference type="ChEBI" id="CHEBI:18420"/>
    </cofactor>
</comment>
<comment type="pathway">
    <text evidence="1">Pyrimidine metabolism; UMP biosynthesis via de novo pathway; UMP from orotate: step 1/2.</text>
</comment>
<comment type="subunit">
    <text evidence="1">Homodimer.</text>
</comment>
<comment type="similarity">
    <text evidence="1">Belongs to the purine/pyrimidine phosphoribosyltransferase family. PyrE subfamily.</text>
</comment>
<sequence length="217" mass="23803">MKAYQRQFIEFALEKQVLKFGEFTLKSGRKSPYFFNAGLFNSGRDLARLGRFYAAALMDGGIEFDVLFGPAYKGIPIASATAVQLVEQHDVDVPWCFNRKEAKDHGEGGNLVGSPLKGRIMLVDDVITAGTAIRESMDLIQANGASLAGVLIALDRQEKGKGELSAIQEVERDYGAHIIAIIQMGDLIAYLEEKQAEQPELAVQLAAMQAYRAQYGI</sequence>
<reference key="1">
    <citation type="journal article" date="2008" name="BMC Genomics">
        <title>The genome of Aeromonas salmonicida subsp. salmonicida A449: insights into the evolution of a fish pathogen.</title>
        <authorList>
            <person name="Reith M.E."/>
            <person name="Singh R.K."/>
            <person name="Curtis B."/>
            <person name="Boyd J.M."/>
            <person name="Bouevitch A."/>
            <person name="Kimball J."/>
            <person name="Munholland J."/>
            <person name="Murphy C."/>
            <person name="Sarty D."/>
            <person name="Williams J."/>
            <person name="Nash J.H."/>
            <person name="Johnson S.C."/>
            <person name="Brown L.L."/>
        </authorList>
    </citation>
    <scope>NUCLEOTIDE SEQUENCE [LARGE SCALE GENOMIC DNA]</scope>
    <source>
        <strain>A449</strain>
    </source>
</reference>
<organism>
    <name type="scientific">Aeromonas salmonicida (strain A449)</name>
    <dbReference type="NCBI Taxonomy" id="382245"/>
    <lineage>
        <taxon>Bacteria</taxon>
        <taxon>Pseudomonadati</taxon>
        <taxon>Pseudomonadota</taxon>
        <taxon>Gammaproteobacteria</taxon>
        <taxon>Aeromonadales</taxon>
        <taxon>Aeromonadaceae</taxon>
        <taxon>Aeromonas</taxon>
    </lineage>
</organism>
<keyword id="KW-0328">Glycosyltransferase</keyword>
<keyword id="KW-0460">Magnesium</keyword>
<keyword id="KW-0665">Pyrimidine biosynthesis</keyword>
<keyword id="KW-0808">Transferase</keyword>
<protein>
    <recommendedName>
        <fullName evidence="1">Orotate phosphoribosyltransferase</fullName>
        <shortName evidence="1">OPRT</shortName>
        <shortName evidence="1">OPRTase</shortName>
        <ecNumber evidence="1">2.4.2.10</ecNumber>
    </recommendedName>
</protein>
<evidence type="ECO:0000255" key="1">
    <source>
        <dbReference type="HAMAP-Rule" id="MF_01208"/>
    </source>
</evidence>
<proteinExistence type="inferred from homology"/>
<feature type="chain" id="PRO_1000066201" description="Orotate phosphoribosyltransferase">
    <location>
        <begin position="1"/>
        <end position="217"/>
    </location>
</feature>
<feature type="binding site" description="in other chain" evidence="1">
    <location>
        <position position="26"/>
    </location>
    <ligand>
        <name>5-phospho-alpha-D-ribose 1-diphosphate</name>
        <dbReference type="ChEBI" id="CHEBI:58017"/>
        <note>ligand shared between dimeric partners</note>
    </ligand>
</feature>
<feature type="binding site" evidence="1">
    <location>
        <begin position="34"/>
        <end position="35"/>
    </location>
    <ligand>
        <name>orotate</name>
        <dbReference type="ChEBI" id="CHEBI:30839"/>
    </ligand>
</feature>
<feature type="binding site" description="in other chain" evidence="1">
    <location>
        <begin position="72"/>
        <end position="73"/>
    </location>
    <ligand>
        <name>5-phospho-alpha-D-ribose 1-diphosphate</name>
        <dbReference type="ChEBI" id="CHEBI:58017"/>
        <note>ligand shared between dimeric partners</note>
    </ligand>
</feature>
<feature type="binding site" evidence="1">
    <location>
        <position position="99"/>
    </location>
    <ligand>
        <name>5-phospho-alpha-D-ribose 1-diphosphate</name>
        <dbReference type="ChEBI" id="CHEBI:58017"/>
        <note>ligand shared between dimeric partners</note>
    </ligand>
</feature>
<feature type="binding site" description="in other chain" evidence="1">
    <location>
        <position position="100"/>
    </location>
    <ligand>
        <name>5-phospho-alpha-D-ribose 1-diphosphate</name>
        <dbReference type="ChEBI" id="CHEBI:58017"/>
        <note>ligand shared between dimeric partners</note>
    </ligand>
</feature>
<feature type="binding site" evidence="1">
    <location>
        <position position="103"/>
    </location>
    <ligand>
        <name>5-phospho-alpha-D-ribose 1-diphosphate</name>
        <dbReference type="ChEBI" id="CHEBI:58017"/>
        <note>ligand shared between dimeric partners</note>
    </ligand>
</feature>
<feature type="binding site" evidence="1">
    <location>
        <position position="105"/>
    </location>
    <ligand>
        <name>5-phospho-alpha-D-ribose 1-diphosphate</name>
        <dbReference type="ChEBI" id="CHEBI:58017"/>
        <note>ligand shared between dimeric partners</note>
    </ligand>
</feature>
<feature type="binding site" description="in other chain" evidence="1">
    <location>
        <begin position="124"/>
        <end position="132"/>
    </location>
    <ligand>
        <name>5-phospho-alpha-D-ribose 1-diphosphate</name>
        <dbReference type="ChEBI" id="CHEBI:58017"/>
        <note>ligand shared between dimeric partners</note>
    </ligand>
</feature>
<feature type="binding site" evidence="1">
    <location>
        <position position="128"/>
    </location>
    <ligand>
        <name>orotate</name>
        <dbReference type="ChEBI" id="CHEBI:30839"/>
    </ligand>
</feature>
<feature type="binding site" evidence="1">
    <location>
        <position position="156"/>
    </location>
    <ligand>
        <name>orotate</name>
        <dbReference type="ChEBI" id="CHEBI:30839"/>
    </ligand>
</feature>
<accession>A4SHC9</accession>
<gene>
    <name evidence="1" type="primary">pyrE</name>
    <name type="ordered locus">ASA_0102</name>
</gene>